<protein>
    <recommendedName>
        <fullName>UPF0324 membrane protein blr3189</fullName>
    </recommendedName>
</protein>
<evidence type="ECO:0000255" key="1"/>
<evidence type="ECO:0000305" key="2"/>
<name>Y3189_BRADU</name>
<keyword id="KW-1003">Cell membrane</keyword>
<keyword id="KW-0472">Membrane</keyword>
<keyword id="KW-1185">Reference proteome</keyword>
<keyword id="KW-0812">Transmembrane</keyword>
<keyword id="KW-1133">Transmembrane helix</keyword>
<dbReference type="EMBL" id="BA000040">
    <property type="protein sequence ID" value="BAC48454.1"/>
    <property type="molecule type" value="Genomic_DNA"/>
</dbReference>
<dbReference type="RefSeq" id="NP_769829.1">
    <property type="nucleotide sequence ID" value="NC_004463.1"/>
</dbReference>
<dbReference type="RefSeq" id="WP_011085973.1">
    <property type="nucleotide sequence ID" value="NC_004463.1"/>
</dbReference>
<dbReference type="FunCoup" id="Q89QD9">
    <property type="interactions" value="105"/>
</dbReference>
<dbReference type="STRING" id="224911.AAV28_12980"/>
<dbReference type="EnsemblBacteria" id="BAC48454">
    <property type="protein sequence ID" value="BAC48454"/>
    <property type="gene ID" value="BAC48454"/>
</dbReference>
<dbReference type="GeneID" id="46490228"/>
<dbReference type="KEGG" id="bja:blr3189"/>
<dbReference type="PATRIC" id="fig|224911.44.peg.2831"/>
<dbReference type="eggNOG" id="COG2855">
    <property type="taxonomic scope" value="Bacteria"/>
</dbReference>
<dbReference type="HOGENOM" id="CLU_033541_3_1_5"/>
<dbReference type="InParanoid" id="Q89QD9"/>
<dbReference type="OrthoDB" id="5393513at2"/>
<dbReference type="PhylomeDB" id="Q89QD9"/>
<dbReference type="Proteomes" id="UP000002526">
    <property type="component" value="Chromosome"/>
</dbReference>
<dbReference type="GO" id="GO:0005886">
    <property type="term" value="C:plasma membrane"/>
    <property type="evidence" value="ECO:0000318"/>
    <property type="project" value="GO_Central"/>
</dbReference>
<dbReference type="InterPro" id="IPR018383">
    <property type="entry name" value="UPF0324_pro"/>
</dbReference>
<dbReference type="PANTHER" id="PTHR30106">
    <property type="entry name" value="INNER MEMBRANE PROTEIN YEIH-RELATED"/>
    <property type="match status" value="1"/>
</dbReference>
<dbReference type="PANTHER" id="PTHR30106:SF2">
    <property type="entry name" value="UPF0324 INNER MEMBRANE PROTEIN YEIH"/>
    <property type="match status" value="1"/>
</dbReference>
<dbReference type="Pfam" id="PF03601">
    <property type="entry name" value="Cons_hypoth698"/>
    <property type="match status" value="1"/>
</dbReference>
<comment type="subcellular location">
    <subcellularLocation>
        <location evidence="2">Cell membrane</location>
        <topology evidence="2">Multi-pass membrane protein</topology>
    </subcellularLocation>
</comment>
<comment type="similarity">
    <text evidence="2">Belongs to the UPF0324 family.</text>
</comment>
<reference key="1">
    <citation type="journal article" date="2002" name="DNA Res.">
        <title>Complete genomic sequence of nitrogen-fixing symbiotic bacterium Bradyrhizobium japonicum USDA110.</title>
        <authorList>
            <person name="Kaneko T."/>
            <person name="Nakamura Y."/>
            <person name="Sato S."/>
            <person name="Minamisawa K."/>
            <person name="Uchiumi T."/>
            <person name="Sasamoto S."/>
            <person name="Watanabe A."/>
            <person name="Idesawa K."/>
            <person name="Iriguchi M."/>
            <person name="Kawashima K."/>
            <person name="Kohara M."/>
            <person name="Matsumoto M."/>
            <person name="Shimpo S."/>
            <person name="Tsuruoka H."/>
            <person name="Wada T."/>
            <person name="Yamada M."/>
            <person name="Tabata S."/>
        </authorList>
    </citation>
    <scope>NUCLEOTIDE SEQUENCE [LARGE SCALE GENOMIC DNA]</scope>
    <source>
        <strain>JCM 10833 / BCRC 13528 / IAM 13628 / NBRC 14792 / USDA 110</strain>
    </source>
</reference>
<accession>Q89QD9</accession>
<gene>
    <name type="ordered locus">blr3189</name>
</gene>
<feature type="chain" id="PRO_0000157400" description="UPF0324 membrane protein blr3189">
    <location>
        <begin position="1"/>
        <end position="352"/>
    </location>
</feature>
<feature type="transmembrane region" description="Helical" evidence="1">
    <location>
        <begin position="21"/>
        <end position="43"/>
    </location>
</feature>
<feature type="transmembrane region" description="Helical" evidence="1">
    <location>
        <begin position="53"/>
        <end position="71"/>
    </location>
</feature>
<feature type="transmembrane region" description="Helical" evidence="1">
    <location>
        <begin position="88"/>
        <end position="110"/>
    </location>
</feature>
<feature type="transmembrane region" description="Helical" evidence="1">
    <location>
        <begin position="114"/>
        <end position="136"/>
    </location>
</feature>
<feature type="transmembrane region" description="Helical" evidence="1">
    <location>
        <begin position="143"/>
        <end position="165"/>
    </location>
</feature>
<feature type="transmembrane region" description="Helical" evidence="1">
    <location>
        <begin position="175"/>
        <end position="197"/>
    </location>
</feature>
<feature type="transmembrane region" description="Helical" evidence="1">
    <location>
        <begin position="204"/>
        <end position="226"/>
    </location>
</feature>
<feature type="transmembrane region" description="Helical" evidence="1">
    <location>
        <begin position="236"/>
        <end position="253"/>
    </location>
</feature>
<feature type="transmembrane region" description="Helical" evidence="1">
    <location>
        <begin position="265"/>
        <end position="284"/>
    </location>
</feature>
<feature type="transmembrane region" description="Helical" evidence="1">
    <location>
        <begin position="294"/>
        <end position="316"/>
    </location>
</feature>
<feature type="transmembrane region" description="Helical" evidence="1">
    <location>
        <begin position="329"/>
        <end position="351"/>
    </location>
</feature>
<proteinExistence type="inferred from homology"/>
<organism>
    <name type="scientific">Bradyrhizobium diazoefficiens (strain JCM 10833 / BCRC 13528 / IAM 13628 / NBRC 14792 / USDA 110)</name>
    <dbReference type="NCBI Taxonomy" id="224911"/>
    <lineage>
        <taxon>Bacteria</taxon>
        <taxon>Pseudomonadati</taxon>
        <taxon>Pseudomonadota</taxon>
        <taxon>Alphaproteobacteria</taxon>
        <taxon>Hyphomicrobiales</taxon>
        <taxon>Nitrobacteraceae</taxon>
        <taxon>Bradyrhizobium</taxon>
    </lineage>
</organism>
<sequence length="352" mass="36255">MSQNQASSPADAKPATAISRIAALIPGILLCIAVAGVSALLERAELGVFEHPYVEALVMAILLGMALRSFWKPAPRWQAGIAFSAKQLLEVAVMLLGASISFAAIAASGIALLASIAAVVVIALCVSFGLSRLLGLSTRLSILIACGNSICGNSAIAAVAPIIGANNDEIASSISFTAILGVMMVLGLPLLIPLLQLSATQYGILAGLTVYAVPQVLAATVPAGLVSTQIGTLVKLMRVLMLGPVVVGLSLVASRWQSDAKKTNVGFFRLVPWFILGFLALATLRSLEIVPSTVVGPVTKITSFLTVVSMAALGLGVDVRVLANVGGRVTAAVTLSLMLLLGISIALVHWFK</sequence>